<proteinExistence type="inferred from homology"/>
<keyword id="KW-0028">Amino-acid biosynthesis</keyword>
<keyword id="KW-0963">Cytoplasm</keyword>
<keyword id="KW-0521">NADP</keyword>
<keyword id="KW-0560">Oxidoreductase</keyword>
<keyword id="KW-0641">Proline biosynthesis</keyword>
<keyword id="KW-1185">Reference proteome</keyword>
<comment type="function">
    <text evidence="1">Catalyzes the NADPH-dependent reduction of L-glutamate 5-phosphate into L-glutamate 5-semialdehyde and phosphate. The product spontaneously undergoes cyclization to form 1-pyrroline-5-carboxylate.</text>
</comment>
<comment type="catalytic activity">
    <reaction evidence="1">
        <text>L-glutamate 5-semialdehyde + phosphate + NADP(+) = L-glutamyl 5-phosphate + NADPH + H(+)</text>
        <dbReference type="Rhea" id="RHEA:19541"/>
        <dbReference type="ChEBI" id="CHEBI:15378"/>
        <dbReference type="ChEBI" id="CHEBI:43474"/>
        <dbReference type="ChEBI" id="CHEBI:57783"/>
        <dbReference type="ChEBI" id="CHEBI:58066"/>
        <dbReference type="ChEBI" id="CHEBI:58274"/>
        <dbReference type="ChEBI" id="CHEBI:58349"/>
        <dbReference type="EC" id="1.2.1.41"/>
    </reaction>
</comment>
<comment type="pathway">
    <text evidence="1">Amino-acid biosynthesis; L-proline biosynthesis; L-glutamate 5-semialdehyde from L-glutamate: step 2/2.</text>
</comment>
<comment type="subcellular location">
    <subcellularLocation>
        <location evidence="1">Cytoplasm</location>
    </subcellularLocation>
</comment>
<comment type="similarity">
    <text evidence="1">Belongs to the gamma-glutamyl phosphate reductase family.</text>
</comment>
<sequence>MSTASTTHTQTDALQSDDLAAQCVDIARRAKAASRLLGTLDTNIKDQWLIESADALIEASDAIIAANQLDLENAPKYGLTDAGIDRLRLDEARIAGIATGLREIASLNDPIGEVLDGFARPGGMRIEKRRVPLGVVFFIYESRPNVTADAAGICVKSGNAVILRGGKEAAHSSRAIIEVLHEVGRRVGIPDDAVQLVGTTDRAAVGHFLKQSDNIDVTIPRGGENLIRRVAAEATMPVIKHYDGNCHVYVDESADIEMAVDIIENAKCQRMGVCNACESLLIHQSIAADALPAIAKRLASRGVEMRVDERASAYVPDGVPATDADFAAEFLGPQISIAVVDSLAAATDHINHYGSGHTDAIVTSNIAASEQFTALVDSSAVMVNASTRFNDGGMFGLGAEIGISTDKFHARGPCGLRELTSYKYIVRGNGHIRG</sequence>
<dbReference type="EC" id="1.2.1.41" evidence="1"/>
<dbReference type="EMBL" id="BX294146">
    <property type="protein sequence ID" value="CAD75313.1"/>
    <property type="molecule type" value="Genomic_DNA"/>
</dbReference>
<dbReference type="RefSeq" id="NP_867766.1">
    <property type="nucleotide sequence ID" value="NC_005027.1"/>
</dbReference>
<dbReference type="RefSeq" id="WP_011121351.1">
    <property type="nucleotide sequence ID" value="NC_005027.1"/>
</dbReference>
<dbReference type="SMR" id="Q7UNV2"/>
<dbReference type="FunCoup" id="Q7UNV2">
    <property type="interactions" value="417"/>
</dbReference>
<dbReference type="STRING" id="243090.RB7359"/>
<dbReference type="EnsemblBacteria" id="CAD75313">
    <property type="protein sequence ID" value="CAD75313"/>
    <property type="gene ID" value="RB7359"/>
</dbReference>
<dbReference type="KEGG" id="rba:RB7359"/>
<dbReference type="PATRIC" id="fig|243090.15.peg.3548"/>
<dbReference type="eggNOG" id="COG0014">
    <property type="taxonomic scope" value="Bacteria"/>
</dbReference>
<dbReference type="HOGENOM" id="CLU_030231_0_0_0"/>
<dbReference type="InParanoid" id="Q7UNV2"/>
<dbReference type="OrthoDB" id="9809970at2"/>
<dbReference type="UniPathway" id="UPA00098">
    <property type="reaction ID" value="UER00360"/>
</dbReference>
<dbReference type="Proteomes" id="UP000001025">
    <property type="component" value="Chromosome"/>
</dbReference>
<dbReference type="GO" id="GO:0005737">
    <property type="term" value="C:cytoplasm"/>
    <property type="evidence" value="ECO:0007669"/>
    <property type="project" value="UniProtKB-SubCell"/>
</dbReference>
<dbReference type="GO" id="GO:0004350">
    <property type="term" value="F:glutamate-5-semialdehyde dehydrogenase activity"/>
    <property type="evidence" value="ECO:0000318"/>
    <property type="project" value="GO_Central"/>
</dbReference>
<dbReference type="GO" id="GO:0050661">
    <property type="term" value="F:NADP binding"/>
    <property type="evidence" value="ECO:0007669"/>
    <property type="project" value="InterPro"/>
</dbReference>
<dbReference type="GO" id="GO:0055129">
    <property type="term" value="P:L-proline biosynthetic process"/>
    <property type="evidence" value="ECO:0007669"/>
    <property type="project" value="UniProtKB-UniRule"/>
</dbReference>
<dbReference type="CDD" id="cd07079">
    <property type="entry name" value="ALDH_F18-19_ProA-GPR"/>
    <property type="match status" value="1"/>
</dbReference>
<dbReference type="FunFam" id="3.40.309.10:FF:000006">
    <property type="entry name" value="Gamma-glutamyl phosphate reductase"/>
    <property type="match status" value="1"/>
</dbReference>
<dbReference type="Gene3D" id="3.40.605.10">
    <property type="entry name" value="Aldehyde Dehydrogenase, Chain A, domain 1"/>
    <property type="match status" value="1"/>
</dbReference>
<dbReference type="Gene3D" id="3.40.309.10">
    <property type="entry name" value="Aldehyde Dehydrogenase, Chain A, domain 2"/>
    <property type="match status" value="1"/>
</dbReference>
<dbReference type="HAMAP" id="MF_00412">
    <property type="entry name" value="ProA"/>
    <property type="match status" value="1"/>
</dbReference>
<dbReference type="InterPro" id="IPR016161">
    <property type="entry name" value="Ald_DH/histidinol_DH"/>
</dbReference>
<dbReference type="InterPro" id="IPR016163">
    <property type="entry name" value="Ald_DH_C"/>
</dbReference>
<dbReference type="InterPro" id="IPR016162">
    <property type="entry name" value="Ald_DH_N"/>
</dbReference>
<dbReference type="InterPro" id="IPR015590">
    <property type="entry name" value="Aldehyde_DH_dom"/>
</dbReference>
<dbReference type="InterPro" id="IPR020593">
    <property type="entry name" value="G-glutamylP_reductase_CS"/>
</dbReference>
<dbReference type="InterPro" id="IPR012134">
    <property type="entry name" value="Glu-5-SA_DH"/>
</dbReference>
<dbReference type="InterPro" id="IPR000965">
    <property type="entry name" value="GPR_dom"/>
</dbReference>
<dbReference type="NCBIfam" id="NF001221">
    <property type="entry name" value="PRK00197.1"/>
    <property type="match status" value="1"/>
</dbReference>
<dbReference type="NCBIfam" id="TIGR00407">
    <property type="entry name" value="proA"/>
    <property type="match status" value="1"/>
</dbReference>
<dbReference type="PANTHER" id="PTHR11063:SF8">
    <property type="entry name" value="DELTA-1-PYRROLINE-5-CARBOXYLATE SYNTHASE"/>
    <property type="match status" value="1"/>
</dbReference>
<dbReference type="PANTHER" id="PTHR11063">
    <property type="entry name" value="GLUTAMATE SEMIALDEHYDE DEHYDROGENASE"/>
    <property type="match status" value="1"/>
</dbReference>
<dbReference type="Pfam" id="PF00171">
    <property type="entry name" value="Aldedh"/>
    <property type="match status" value="1"/>
</dbReference>
<dbReference type="PIRSF" id="PIRSF000151">
    <property type="entry name" value="GPR"/>
    <property type="match status" value="1"/>
</dbReference>
<dbReference type="SUPFAM" id="SSF53720">
    <property type="entry name" value="ALDH-like"/>
    <property type="match status" value="1"/>
</dbReference>
<dbReference type="PROSITE" id="PS01223">
    <property type="entry name" value="PROA"/>
    <property type="match status" value="1"/>
</dbReference>
<reference key="1">
    <citation type="journal article" date="2003" name="Proc. Natl. Acad. Sci. U.S.A.">
        <title>Complete genome sequence of the marine planctomycete Pirellula sp. strain 1.</title>
        <authorList>
            <person name="Gloeckner F.O."/>
            <person name="Kube M."/>
            <person name="Bauer M."/>
            <person name="Teeling H."/>
            <person name="Lombardot T."/>
            <person name="Ludwig W."/>
            <person name="Gade D."/>
            <person name="Beck A."/>
            <person name="Borzym K."/>
            <person name="Heitmann K."/>
            <person name="Rabus R."/>
            <person name="Schlesner H."/>
            <person name="Amann R."/>
            <person name="Reinhardt R."/>
        </authorList>
    </citation>
    <scope>NUCLEOTIDE SEQUENCE [LARGE SCALE GENOMIC DNA]</scope>
    <source>
        <strain>DSM 10527 / NCIMB 13988 / SH1</strain>
    </source>
</reference>
<protein>
    <recommendedName>
        <fullName evidence="1">Gamma-glutamyl phosphate reductase</fullName>
        <shortName evidence="1">GPR</shortName>
        <ecNumber evidence="1">1.2.1.41</ecNumber>
    </recommendedName>
    <alternativeName>
        <fullName evidence="1">Glutamate-5-semialdehyde dehydrogenase</fullName>
    </alternativeName>
    <alternativeName>
        <fullName evidence="1">Glutamyl-gamma-semialdehyde dehydrogenase</fullName>
        <shortName evidence="1">GSA dehydrogenase</shortName>
    </alternativeName>
</protein>
<accession>Q7UNV2</accession>
<evidence type="ECO:0000255" key="1">
    <source>
        <dbReference type="HAMAP-Rule" id="MF_00412"/>
    </source>
</evidence>
<name>PROA_RHOBA</name>
<feature type="chain" id="PRO_0000189773" description="Gamma-glutamyl phosphate reductase">
    <location>
        <begin position="1"/>
        <end position="434"/>
    </location>
</feature>
<organism>
    <name type="scientific">Rhodopirellula baltica (strain DSM 10527 / NCIMB 13988 / SH1)</name>
    <dbReference type="NCBI Taxonomy" id="243090"/>
    <lineage>
        <taxon>Bacteria</taxon>
        <taxon>Pseudomonadati</taxon>
        <taxon>Planctomycetota</taxon>
        <taxon>Planctomycetia</taxon>
        <taxon>Pirellulales</taxon>
        <taxon>Pirellulaceae</taxon>
        <taxon>Rhodopirellula</taxon>
    </lineage>
</organism>
<gene>
    <name evidence="1" type="primary">proA</name>
    <name type="ordered locus">RB7359</name>
</gene>